<name>HP302_ARATH</name>
<gene>
    <name evidence="4" type="primary">HP30-2</name>
    <name evidence="6" type="ordered locus">At5g24650</name>
    <name evidence="7" type="ORF">K18P6.19</name>
</gene>
<accession>Q9FLT9</accession>
<accession>Q8L9N9</accession>
<keyword id="KW-0150">Chloroplast</keyword>
<keyword id="KW-0472">Membrane</keyword>
<keyword id="KW-0496">Mitochondrion</keyword>
<keyword id="KW-0934">Plastid</keyword>
<keyword id="KW-1001">Plastid inner membrane</keyword>
<keyword id="KW-0653">Protein transport</keyword>
<keyword id="KW-1185">Reference proteome</keyword>
<keyword id="KW-0812">Transmembrane</keyword>
<keyword id="KW-1133">Transmembrane helix</keyword>
<keyword id="KW-0813">Transport</keyword>
<reference key="1">
    <citation type="journal article" date="2007" name="Plant Physiol.">
        <title>Characterization of the preprotein and amino acid transporter gene family in Arabidopsis.</title>
        <authorList>
            <person name="Murcha M.W."/>
            <person name="Elhafez D."/>
            <person name="Lister R."/>
            <person name="Tonti-Filippini J."/>
            <person name="Baumgartner M."/>
            <person name="Philippar K."/>
            <person name="Carrie C."/>
            <person name="Mokranjac D."/>
            <person name="Soll J."/>
            <person name="Whelan J."/>
        </authorList>
    </citation>
    <scope>NUCLEOTIDE SEQUENCE [MRNA]</scope>
    <scope>SUBCELLULAR LOCATION</scope>
    <scope>GENE FAMILY</scope>
</reference>
<reference key="2">
    <citation type="journal article" date="1998" name="DNA Res.">
        <title>Structural analysis of Arabidopsis thaliana chromosome 5. IV. Sequence features of the regions of 1,456,315 bp covered by nineteen physically assigned P1 and TAC clones.</title>
        <authorList>
            <person name="Sato S."/>
            <person name="Kaneko T."/>
            <person name="Kotani H."/>
            <person name="Nakamura Y."/>
            <person name="Asamizu E."/>
            <person name="Miyajima N."/>
            <person name="Tabata S."/>
        </authorList>
    </citation>
    <scope>NUCLEOTIDE SEQUENCE [LARGE SCALE GENOMIC DNA]</scope>
    <source>
        <strain>cv. Columbia</strain>
    </source>
</reference>
<reference key="3">
    <citation type="journal article" date="2017" name="Plant J.">
        <title>Araport11: a complete reannotation of the Arabidopsis thaliana reference genome.</title>
        <authorList>
            <person name="Cheng C.Y."/>
            <person name="Krishnakumar V."/>
            <person name="Chan A.P."/>
            <person name="Thibaud-Nissen F."/>
            <person name="Schobel S."/>
            <person name="Town C.D."/>
        </authorList>
    </citation>
    <scope>GENOME REANNOTATION</scope>
    <source>
        <strain>cv. Columbia</strain>
    </source>
</reference>
<reference key="4">
    <citation type="journal article" date="2003" name="Science">
        <title>Empirical analysis of transcriptional activity in the Arabidopsis genome.</title>
        <authorList>
            <person name="Yamada K."/>
            <person name="Lim J."/>
            <person name="Dale J.M."/>
            <person name="Chen H."/>
            <person name="Shinn P."/>
            <person name="Palm C.J."/>
            <person name="Southwick A.M."/>
            <person name="Wu H.C."/>
            <person name="Kim C.J."/>
            <person name="Nguyen M."/>
            <person name="Pham P.K."/>
            <person name="Cheuk R.F."/>
            <person name="Karlin-Newmann G."/>
            <person name="Liu S.X."/>
            <person name="Lam B."/>
            <person name="Sakano H."/>
            <person name="Wu T."/>
            <person name="Yu G."/>
            <person name="Miranda M."/>
            <person name="Quach H.L."/>
            <person name="Tripp M."/>
            <person name="Chang C.H."/>
            <person name="Lee J.M."/>
            <person name="Toriumi M.J."/>
            <person name="Chan M.M."/>
            <person name="Tang C.C."/>
            <person name="Onodera C.S."/>
            <person name="Deng J.M."/>
            <person name="Akiyama K."/>
            <person name="Ansari Y."/>
            <person name="Arakawa T."/>
            <person name="Banh J."/>
            <person name="Banno F."/>
            <person name="Bowser L."/>
            <person name="Brooks S.Y."/>
            <person name="Carninci P."/>
            <person name="Chao Q."/>
            <person name="Choy N."/>
            <person name="Enju A."/>
            <person name="Goldsmith A.D."/>
            <person name="Gurjal M."/>
            <person name="Hansen N.F."/>
            <person name="Hayashizaki Y."/>
            <person name="Johnson-Hopson C."/>
            <person name="Hsuan V.W."/>
            <person name="Iida K."/>
            <person name="Karnes M."/>
            <person name="Khan S."/>
            <person name="Koesema E."/>
            <person name="Ishida J."/>
            <person name="Jiang P.X."/>
            <person name="Jones T."/>
            <person name="Kawai J."/>
            <person name="Kamiya A."/>
            <person name="Meyers C."/>
            <person name="Nakajima M."/>
            <person name="Narusaka M."/>
            <person name="Seki M."/>
            <person name="Sakurai T."/>
            <person name="Satou M."/>
            <person name="Tamse R."/>
            <person name="Vaysberg M."/>
            <person name="Wallender E.K."/>
            <person name="Wong C."/>
            <person name="Yamamura Y."/>
            <person name="Yuan S."/>
            <person name="Shinozaki K."/>
            <person name="Davis R.W."/>
            <person name="Theologis A."/>
            <person name="Ecker J.R."/>
        </authorList>
    </citation>
    <scope>NUCLEOTIDE SEQUENCE [LARGE SCALE MRNA]</scope>
    <source>
        <strain>cv. Columbia</strain>
    </source>
</reference>
<reference key="5">
    <citation type="submission" date="2002-03" db="EMBL/GenBank/DDBJ databases">
        <title>Full-length cDNA from Arabidopsis thaliana.</title>
        <authorList>
            <person name="Brover V.V."/>
            <person name="Troukhan M.E."/>
            <person name="Alexandrov N.A."/>
            <person name="Lu Y.-P."/>
            <person name="Flavell R.B."/>
            <person name="Feldmann K.A."/>
        </authorList>
    </citation>
    <scope>NUCLEOTIDE SEQUENCE [LARGE SCALE MRNA]</scope>
</reference>
<reference key="6">
    <citation type="journal article" date="2005" name="Mol. Cell. Proteomics">
        <title>Proteome analysis of the rice etioplast: metabolic and regulatory networks and novel protein functions.</title>
        <authorList>
            <person name="von Zychlinski A."/>
            <person name="Kleffmann T."/>
            <person name="Krishnamurthy N."/>
            <person name="Sjoelander K."/>
            <person name="Baginsky S."/>
            <person name="Gruissem W."/>
        </authorList>
    </citation>
    <scope>IDENTIFICATION</scope>
</reference>
<reference key="7">
    <citation type="journal article" date="2013" name="Proc. Natl. Acad. Sci. U.S.A.">
        <title>Three proteins mediate import of transit sequence-less precursors into the inner envelope of chloroplasts in Arabidopsis thaliana.</title>
        <authorList>
            <person name="Rossig C."/>
            <person name="Reinbothe C."/>
            <person name="Gray J."/>
            <person name="Valdes O."/>
            <person name="von Wettstein D."/>
            <person name="Reinbothe S."/>
        </authorList>
    </citation>
    <scope>FUNCTION</scope>
    <scope>DISRUPTION PHENOTYPE</scope>
    <scope>SUBCELLULAR LOCATION</scope>
    <scope>SUBUNIT</scope>
    <scope>INTERACTION WITH CEQORH</scope>
    <source>
        <strain>cv. Columbia</strain>
    </source>
</reference>
<sequence length="259" mass="27772">MGKDGEGDKKRETMAVMSLMKDQQNPIQQFQVKFKEIETGFKSWLSKQKLPVEAAVVTAMGGVQGAFIGGLMGTLSPEMPQAGIDPQAMASLKQTQALVGGPLVQARNFAAITGVNAGIACVMKRIRGKEDLESAVVAAFGSGVAYSLVSAGLQGQPMNAITTAAGFAVFQGVFFKLGERFSKPSVEDPYYTRGRSMLLKLGLEKYEKNFKKGLLADPTLPLLTDSALRDVSIPPGPRLLILDHIQRDPELKGKRGSRG</sequence>
<dbReference type="EMBL" id="DQ405267">
    <property type="protein sequence ID" value="ABD64056.1"/>
    <property type="molecule type" value="mRNA"/>
</dbReference>
<dbReference type="EMBL" id="AB010068">
    <property type="protein sequence ID" value="BAB11217.1"/>
    <property type="molecule type" value="Genomic_DNA"/>
</dbReference>
<dbReference type="EMBL" id="CP002688">
    <property type="protein sequence ID" value="AED93344.1"/>
    <property type="molecule type" value="Genomic_DNA"/>
</dbReference>
<dbReference type="EMBL" id="AY070735">
    <property type="protein sequence ID" value="AAL50076.1"/>
    <property type="molecule type" value="mRNA"/>
</dbReference>
<dbReference type="EMBL" id="AY142048">
    <property type="protein sequence ID" value="AAM98312.1"/>
    <property type="molecule type" value="mRNA"/>
</dbReference>
<dbReference type="EMBL" id="AY088327">
    <property type="protein sequence ID" value="AAM65866.1"/>
    <property type="status" value="ALT_INIT"/>
    <property type="molecule type" value="mRNA"/>
</dbReference>
<dbReference type="RefSeq" id="NP_197853.1">
    <property type="nucleotide sequence ID" value="NM_122373.3"/>
</dbReference>
<dbReference type="SMR" id="Q9FLT9"/>
<dbReference type="FunCoup" id="Q9FLT9">
    <property type="interactions" value="1736"/>
</dbReference>
<dbReference type="STRING" id="3702.Q9FLT9"/>
<dbReference type="PaxDb" id="3702-AT5G24650.1"/>
<dbReference type="ProteomicsDB" id="230265"/>
<dbReference type="EnsemblPlants" id="AT5G24650.1">
    <property type="protein sequence ID" value="AT5G24650.1"/>
    <property type="gene ID" value="AT5G24650"/>
</dbReference>
<dbReference type="GeneID" id="832536"/>
<dbReference type="Gramene" id="AT5G24650.1">
    <property type="protein sequence ID" value="AT5G24650.1"/>
    <property type="gene ID" value="AT5G24650"/>
</dbReference>
<dbReference type="KEGG" id="ath:AT5G24650"/>
<dbReference type="Araport" id="AT5G24650"/>
<dbReference type="TAIR" id="AT5G24650">
    <property type="gene designation" value="HP30-2"/>
</dbReference>
<dbReference type="eggNOG" id="ENOG502QPIB">
    <property type="taxonomic scope" value="Eukaryota"/>
</dbReference>
<dbReference type="HOGENOM" id="CLU_072970_0_0_1"/>
<dbReference type="InParanoid" id="Q9FLT9"/>
<dbReference type="OMA" id="QSEDTYY"/>
<dbReference type="PhylomeDB" id="Q9FLT9"/>
<dbReference type="PRO" id="PR:Q9FLT9"/>
<dbReference type="Proteomes" id="UP000006548">
    <property type="component" value="Chromosome 5"/>
</dbReference>
<dbReference type="ExpressionAtlas" id="Q9FLT9">
    <property type="expression patterns" value="baseline and differential"/>
</dbReference>
<dbReference type="GO" id="GO:0009507">
    <property type="term" value="C:chloroplast"/>
    <property type="evidence" value="ECO:0000314"/>
    <property type="project" value="UniProtKB"/>
</dbReference>
<dbReference type="GO" id="GO:0009941">
    <property type="term" value="C:chloroplast envelope"/>
    <property type="evidence" value="ECO:0007005"/>
    <property type="project" value="TAIR"/>
</dbReference>
<dbReference type="GO" id="GO:0009706">
    <property type="term" value="C:chloroplast inner membrane"/>
    <property type="evidence" value="ECO:0000314"/>
    <property type="project" value="UniProtKB"/>
</dbReference>
<dbReference type="GO" id="GO:0005739">
    <property type="term" value="C:mitochondrion"/>
    <property type="evidence" value="ECO:0000314"/>
    <property type="project" value="UniProtKB"/>
</dbReference>
<dbReference type="GO" id="GO:0000325">
    <property type="term" value="C:plant-type vacuole"/>
    <property type="evidence" value="ECO:0007005"/>
    <property type="project" value="TAIR"/>
</dbReference>
<dbReference type="GO" id="GO:0005886">
    <property type="term" value="C:plasma membrane"/>
    <property type="evidence" value="ECO:0007005"/>
    <property type="project" value="TAIR"/>
</dbReference>
<dbReference type="GO" id="GO:0009536">
    <property type="term" value="C:plastid"/>
    <property type="evidence" value="ECO:0007005"/>
    <property type="project" value="TAIR"/>
</dbReference>
<dbReference type="GO" id="GO:0042721">
    <property type="term" value="C:TIM22 mitochondrial import inner membrane insertion complex"/>
    <property type="evidence" value="ECO:0007669"/>
    <property type="project" value="InterPro"/>
</dbReference>
<dbReference type="GO" id="GO:0005773">
    <property type="term" value="C:vacuole"/>
    <property type="evidence" value="ECO:0007005"/>
    <property type="project" value="TAIR"/>
</dbReference>
<dbReference type="GO" id="GO:0007005">
    <property type="term" value="P:mitochondrion organization"/>
    <property type="evidence" value="ECO:0000316"/>
    <property type="project" value="TAIR"/>
</dbReference>
<dbReference type="GO" id="GO:0045039">
    <property type="term" value="P:protein insertion into mitochondrial inner membrane"/>
    <property type="evidence" value="ECO:0007669"/>
    <property type="project" value="InterPro"/>
</dbReference>
<dbReference type="GO" id="GO:0045036">
    <property type="term" value="P:protein targeting to chloroplast"/>
    <property type="evidence" value="ECO:0000315"/>
    <property type="project" value="UniProtKB"/>
</dbReference>
<dbReference type="GO" id="GO:0016031">
    <property type="term" value="P:tRNA import into mitochondrion"/>
    <property type="evidence" value="ECO:0000316"/>
    <property type="project" value="TAIR"/>
</dbReference>
<dbReference type="CDD" id="cd09487">
    <property type="entry name" value="SAM_superfamily"/>
    <property type="match status" value="1"/>
</dbReference>
<dbReference type="FunFam" id="1.10.150.50:FF:000069">
    <property type="entry name" value="mitochondrial import inner membrane translocase subunit TIM22-like"/>
    <property type="match status" value="1"/>
</dbReference>
<dbReference type="Gene3D" id="1.10.150.50">
    <property type="entry name" value="Transcription Factor, Ets-1"/>
    <property type="match status" value="1"/>
</dbReference>
<dbReference type="InterPro" id="IPR001660">
    <property type="entry name" value="SAM"/>
</dbReference>
<dbReference type="InterPro" id="IPR013761">
    <property type="entry name" value="SAM/pointed_sf"/>
</dbReference>
<dbReference type="InterPro" id="IPR039175">
    <property type="entry name" value="TIM22"/>
</dbReference>
<dbReference type="PANTHER" id="PTHR14110:SF29">
    <property type="entry name" value="CHLOROPLASTIC IMPORT INNER MEMBRANE TRANSLOCASE SUBUNIT HP30-2"/>
    <property type="match status" value="1"/>
</dbReference>
<dbReference type="PANTHER" id="PTHR14110">
    <property type="entry name" value="MITOCHONDRIAL IMPORT INNER MEMBRANE TRANSLOCASE SUBUNIT TIM22"/>
    <property type="match status" value="1"/>
</dbReference>
<dbReference type="Pfam" id="PF00536">
    <property type="entry name" value="SAM_1"/>
    <property type="match status" value="1"/>
</dbReference>
<dbReference type="Pfam" id="PF02466">
    <property type="entry name" value="Tim17"/>
    <property type="match status" value="1"/>
</dbReference>
<dbReference type="SUPFAM" id="SSF47769">
    <property type="entry name" value="SAM/Pointed domain"/>
    <property type="match status" value="1"/>
</dbReference>
<evidence type="ECO:0000255" key="1"/>
<evidence type="ECO:0000269" key="2">
    <source>
    </source>
</evidence>
<evidence type="ECO:0000269" key="3">
    <source>
    </source>
</evidence>
<evidence type="ECO:0000303" key="4">
    <source>
    </source>
</evidence>
<evidence type="ECO:0000305" key="5"/>
<evidence type="ECO:0000312" key="6">
    <source>
        <dbReference type="Araport" id="AT5G24650"/>
    </source>
</evidence>
<evidence type="ECO:0000312" key="7">
    <source>
        <dbReference type="EMBL" id="AED93344.1"/>
    </source>
</evidence>
<comment type="function">
    <text evidence="3">Together with HP30-1 and HP20, triggers the import and insertion of transit sequence-less multi-pass transmembrane proteins (e.g. CEQORH) into the chloroplastic inner membrane.</text>
</comment>
<comment type="subunit">
    <text evidence="3">Probable component of a protein-conducting channel made of HP30-1, HP30-2 and HP20 that mediates the import of transit sequence-less proteins into the chloroplastic inner membrane. Interacts with CEQORH.</text>
</comment>
<comment type="subcellular location">
    <subcellularLocation>
        <location evidence="2">Mitochondrion membrane</location>
        <topology evidence="1">Multi-pass membrane protein</topology>
    </subcellularLocation>
    <subcellularLocation>
        <location evidence="2 3">Plastid</location>
        <location evidence="2 3">Chloroplast inner membrane</location>
        <topology evidence="1">Multi-pass membrane protein</topology>
    </subcellularLocation>
    <text evidence="2">Seems to be present both in chloroplast and mitochondrion.</text>
</comment>
<comment type="disruption phenotype">
    <text evidence="3">Plants lacking both HP30-1 and HP30-2 are yellow to pale-green and impaired import of CEQORH in chloroplast inner membranes.</text>
</comment>
<comment type="similarity">
    <text evidence="5">Belongs to the Tim17/Tim22/Tim23 family.</text>
</comment>
<comment type="sequence caution" evidence="5">
    <conflict type="erroneous initiation">
        <sequence resource="EMBL-CDS" id="AAM65866"/>
    </conflict>
    <text>Truncated N-terminus.</text>
</comment>
<organism>
    <name type="scientific">Arabidopsis thaliana</name>
    <name type="common">Mouse-ear cress</name>
    <dbReference type="NCBI Taxonomy" id="3702"/>
    <lineage>
        <taxon>Eukaryota</taxon>
        <taxon>Viridiplantae</taxon>
        <taxon>Streptophyta</taxon>
        <taxon>Embryophyta</taxon>
        <taxon>Tracheophyta</taxon>
        <taxon>Spermatophyta</taxon>
        <taxon>Magnoliopsida</taxon>
        <taxon>eudicotyledons</taxon>
        <taxon>Gunneridae</taxon>
        <taxon>Pentapetalae</taxon>
        <taxon>rosids</taxon>
        <taxon>malvids</taxon>
        <taxon>Brassicales</taxon>
        <taxon>Brassicaceae</taxon>
        <taxon>Camelineae</taxon>
        <taxon>Arabidopsis</taxon>
    </lineage>
</organism>
<feature type="chain" id="PRO_0000443725" description="Chloroplastic import inner membrane translocase subunit HP30-2">
    <location>
        <begin position="1"/>
        <end position="259"/>
    </location>
</feature>
<feature type="transmembrane region" description="Helical" evidence="1">
    <location>
        <begin position="55"/>
        <end position="75"/>
    </location>
</feature>
<feature type="transmembrane region" description="Helical" evidence="1">
    <location>
        <begin position="108"/>
        <end position="124"/>
    </location>
</feature>
<feature type="transmembrane region" description="Helical" evidence="1">
    <location>
        <begin position="135"/>
        <end position="155"/>
    </location>
</feature>
<feature type="transmembrane region" description="Helical" evidence="1">
    <location>
        <begin position="158"/>
        <end position="178"/>
    </location>
</feature>
<protein>
    <recommendedName>
        <fullName evidence="5">Chloroplastic import inner membrane translocase subunit HP30-2</fullName>
    </recommendedName>
    <alternativeName>
        <fullName evidence="4">Hypothetical inner plastid envelope protein of 30 kDa 2</fullName>
        <shortName evidence="4">AtHP30-2</shortName>
        <shortName evidence="4">Hypothetical protein 30-2</shortName>
    </alternativeName>
</protein>
<proteinExistence type="evidence at protein level"/>